<proteinExistence type="inferred from homology"/>
<dbReference type="EC" id="2.1.1.163" evidence="1"/>
<dbReference type="EMBL" id="CP000730">
    <property type="protein sequence ID" value="ABX29418.1"/>
    <property type="molecule type" value="Genomic_DNA"/>
</dbReference>
<dbReference type="RefSeq" id="WP_000774684.1">
    <property type="nucleotide sequence ID" value="NC_010079.1"/>
</dbReference>
<dbReference type="SMR" id="A8Z450"/>
<dbReference type="KEGG" id="sax:USA300HOU_1408"/>
<dbReference type="HOGENOM" id="CLU_037990_0_0_9"/>
<dbReference type="UniPathway" id="UPA00079">
    <property type="reaction ID" value="UER00169"/>
</dbReference>
<dbReference type="GO" id="GO:0043770">
    <property type="term" value="F:demethylmenaquinone methyltransferase activity"/>
    <property type="evidence" value="ECO:0007669"/>
    <property type="project" value="UniProtKB-UniRule"/>
</dbReference>
<dbReference type="GO" id="GO:0009234">
    <property type="term" value="P:menaquinone biosynthetic process"/>
    <property type="evidence" value="ECO:0007669"/>
    <property type="project" value="UniProtKB-UniRule"/>
</dbReference>
<dbReference type="GO" id="GO:0032259">
    <property type="term" value="P:methylation"/>
    <property type="evidence" value="ECO:0007669"/>
    <property type="project" value="UniProtKB-KW"/>
</dbReference>
<dbReference type="CDD" id="cd02440">
    <property type="entry name" value="AdoMet_MTases"/>
    <property type="match status" value="1"/>
</dbReference>
<dbReference type="FunFam" id="3.40.50.150:FF:000086">
    <property type="entry name" value="Demethylmenaquinone methyltransferase"/>
    <property type="match status" value="1"/>
</dbReference>
<dbReference type="Gene3D" id="3.40.50.150">
    <property type="entry name" value="Vaccinia Virus protein VP39"/>
    <property type="match status" value="1"/>
</dbReference>
<dbReference type="HAMAP" id="MF_01813">
    <property type="entry name" value="MenG_UbiE_methyltr"/>
    <property type="match status" value="1"/>
</dbReference>
<dbReference type="InterPro" id="IPR029063">
    <property type="entry name" value="SAM-dependent_MTases_sf"/>
</dbReference>
<dbReference type="InterPro" id="IPR004033">
    <property type="entry name" value="UbiE/COQ5_MeTrFase"/>
</dbReference>
<dbReference type="InterPro" id="IPR023576">
    <property type="entry name" value="UbiE/COQ5_MeTrFase_CS"/>
</dbReference>
<dbReference type="NCBIfam" id="TIGR01934">
    <property type="entry name" value="MenG_MenH_UbiE"/>
    <property type="match status" value="1"/>
</dbReference>
<dbReference type="NCBIfam" id="NF001243">
    <property type="entry name" value="PRK00216.1-4"/>
    <property type="match status" value="1"/>
</dbReference>
<dbReference type="NCBIfam" id="NF001244">
    <property type="entry name" value="PRK00216.1-5"/>
    <property type="match status" value="1"/>
</dbReference>
<dbReference type="PANTHER" id="PTHR43591:SF24">
    <property type="entry name" value="2-METHOXY-6-POLYPRENYL-1,4-BENZOQUINOL METHYLASE, MITOCHONDRIAL"/>
    <property type="match status" value="1"/>
</dbReference>
<dbReference type="PANTHER" id="PTHR43591">
    <property type="entry name" value="METHYLTRANSFERASE"/>
    <property type="match status" value="1"/>
</dbReference>
<dbReference type="Pfam" id="PF01209">
    <property type="entry name" value="Ubie_methyltran"/>
    <property type="match status" value="1"/>
</dbReference>
<dbReference type="SUPFAM" id="SSF53335">
    <property type="entry name" value="S-adenosyl-L-methionine-dependent methyltransferases"/>
    <property type="match status" value="1"/>
</dbReference>
<dbReference type="PROSITE" id="PS51608">
    <property type="entry name" value="SAM_MT_UBIE"/>
    <property type="match status" value="1"/>
</dbReference>
<dbReference type="PROSITE" id="PS01183">
    <property type="entry name" value="UBIE_1"/>
    <property type="match status" value="1"/>
</dbReference>
<dbReference type="PROSITE" id="PS01184">
    <property type="entry name" value="UBIE_2"/>
    <property type="match status" value="1"/>
</dbReference>
<keyword id="KW-0474">Menaquinone biosynthesis</keyword>
<keyword id="KW-0489">Methyltransferase</keyword>
<keyword id="KW-0949">S-adenosyl-L-methionine</keyword>
<keyword id="KW-0808">Transferase</keyword>
<reference key="1">
    <citation type="journal article" date="2007" name="BMC Microbiol.">
        <title>Subtle genetic changes enhance virulence of methicillin resistant and sensitive Staphylococcus aureus.</title>
        <authorList>
            <person name="Highlander S.K."/>
            <person name="Hulten K.G."/>
            <person name="Qin X."/>
            <person name="Jiang H."/>
            <person name="Yerrapragada S."/>
            <person name="Mason E.O. Jr."/>
            <person name="Shang Y."/>
            <person name="Williams T.M."/>
            <person name="Fortunov R.M."/>
            <person name="Liu Y."/>
            <person name="Igboeli O."/>
            <person name="Petrosino J."/>
            <person name="Tirumalai M."/>
            <person name="Uzman A."/>
            <person name="Fox G.E."/>
            <person name="Cardenas A.M."/>
            <person name="Muzny D.M."/>
            <person name="Hemphill L."/>
            <person name="Ding Y."/>
            <person name="Dugan S."/>
            <person name="Blyth P.R."/>
            <person name="Buhay C.J."/>
            <person name="Dinh H.H."/>
            <person name="Hawes A.C."/>
            <person name="Holder M."/>
            <person name="Kovar C.L."/>
            <person name="Lee S.L."/>
            <person name="Liu W."/>
            <person name="Nazareth L.V."/>
            <person name="Wang Q."/>
            <person name="Zhou J."/>
            <person name="Kaplan S.L."/>
            <person name="Weinstock G.M."/>
        </authorList>
    </citation>
    <scope>NUCLEOTIDE SEQUENCE [LARGE SCALE GENOMIC DNA]</scope>
    <source>
        <strain>USA300 / TCH1516</strain>
    </source>
</reference>
<comment type="function">
    <text evidence="1">Methyltransferase required for the conversion of demethylmenaquinol (DMKH2) to menaquinol (MKH2).</text>
</comment>
<comment type="catalytic activity">
    <reaction evidence="1">
        <text>a 2-demethylmenaquinol + S-adenosyl-L-methionine = a menaquinol + S-adenosyl-L-homocysteine + H(+)</text>
        <dbReference type="Rhea" id="RHEA:42640"/>
        <dbReference type="Rhea" id="RHEA-COMP:9539"/>
        <dbReference type="Rhea" id="RHEA-COMP:9563"/>
        <dbReference type="ChEBI" id="CHEBI:15378"/>
        <dbReference type="ChEBI" id="CHEBI:18151"/>
        <dbReference type="ChEBI" id="CHEBI:55437"/>
        <dbReference type="ChEBI" id="CHEBI:57856"/>
        <dbReference type="ChEBI" id="CHEBI:59789"/>
        <dbReference type="EC" id="2.1.1.163"/>
    </reaction>
</comment>
<comment type="pathway">
    <text evidence="1">Quinol/quinone metabolism; menaquinone biosynthesis; menaquinol from 1,4-dihydroxy-2-naphthoate: step 2/2.</text>
</comment>
<comment type="similarity">
    <text evidence="1">Belongs to the class I-like SAM-binding methyltransferase superfamily. MenG/UbiE family.</text>
</comment>
<protein>
    <recommendedName>
        <fullName evidence="1">Demethylmenaquinone methyltransferase</fullName>
        <ecNumber evidence="1">2.1.1.163</ecNumber>
    </recommendedName>
</protein>
<feature type="chain" id="PRO_1000088301" description="Demethylmenaquinone methyltransferase">
    <location>
        <begin position="1"/>
        <end position="241"/>
    </location>
</feature>
<feature type="binding site" evidence="1">
    <location>
        <position position="60"/>
    </location>
    <ligand>
        <name>S-adenosyl-L-methionine</name>
        <dbReference type="ChEBI" id="CHEBI:59789"/>
    </ligand>
</feature>
<feature type="binding site" evidence="1">
    <location>
        <position position="81"/>
    </location>
    <ligand>
        <name>S-adenosyl-L-methionine</name>
        <dbReference type="ChEBI" id="CHEBI:59789"/>
    </ligand>
</feature>
<feature type="binding site" evidence="1">
    <location>
        <begin position="106"/>
        <end position="107"/>
    </location>
    <ligand>
        <name>S-adenosyl-L-methionine</name>
        <dbReference type="ChEBI" id="CHEBI:59789"/>
    </ligand>
</feature>
<evidence type="ECO:0000255" key="1">
    <source>
        <dbReference type="HAMAP-Rule" id="MF_01813"/>
    </source>
</evidence>
<name>MENG_STAAT</name>
<sequence length="241" mass="27423">MADNKANKEQVHRVFQNISKKYDRLNNIISFEQHKVWRKRVMKDMGVRKGTKALDVCCGTGDWTIALSKAVGPTGEVTGIDFSENMLEVGKEKTASMENVKLVHGDAMELPFEDNSFDYVTIGFGLRNVPDYLVALKEMNRVLKPGGMVVCLETSQPTLPVFKQMYALYFKFVMPIFGKLFAKSKEEYEWLQQSTFNFPGKEELKRMFEEAGFINVRVRSFTGGVAAMHLGYKEKDNTKGD</sequence>
<accession>A8Z450</accession>
<gene>
    <name evidence="1" type="primary">menG</name>
    <name type="ordered locus">USA300HOU_1408</name>
</gene>
<organism>
    <name type="scientific">Staphylococcus aureus (strain USA300 / TCH1516)</name>
    <dbReference type="NCBI Taxonomy" id="451516"/>
    <lineage>
        <taxon>Bacteria</taxon>
        <taxon>Bacillati</taxon>
        <taxon>Bacillota</taxon>
        <taxon>Bacilli</taxon>
        <taxon>Bacillales</taxon>
        <taxon>Staphylococcaceae</taxon>
        <taxon>Staphylococcus</taxon>
    </lineage>
</organism>